<accession>Q2IGN2</accession>
<sequence>MARWRPDTAEREATPEALYLRRREFLALGAAGAVGLLLPRGARAGEPTGAALQVARKVDQAGGETPTPWDSVTGYNNFYELGTSKEDPSRNAGSLRPRPWTVTVAGEVKKPQTLDLDALTRMFPLEERVYRMRCVEAWSMVIPWVGFPLGDLVRRLEPTSRAKYVAFQTLLDRDQLPGQRRPVLPWPYVESLRIDEAAHPLALLAVGLYGRVLPGQNGAPLRLVVPWKYGFKGAKSIVRITFLADRPHTTWNDAAPDEYGFYANVNPEVDHPRWSQARERRIGEFFRRKTLPFNGYAAEVASLYAGLDLRKNY</sequence>
<protein>
    <recommendedName>
        <fullName evidence="1">Protein-methionine-sulfoxide reductase catalytic subunit MsrP</fullName>
        <ecNumber evidence="1">1.8.5.-</ecNumber>
    </recommendedName>
</protein>
<evidence type="ECO:0000255" key="1">
    <source>
        <dbReference type="HAMAP-Rule" id="MF_01206"/>
    </source>
</evidence>
<gene>
    <name evidence="1" type="primary">msrP</name>
    <name type="ordered locus">Adeh_3977</name>
</gene>
<keyword id="KW-0479">Metal-binding</keyword>
<keyword id="KW-0500">Molybdenum</keyword>
<keyword id="KW-0560">Oxidoreductase</keyword>
<keyword id="KW-0574">Periplasm</keyword>
<keyword id="KW-1185">Reference proteome</keyword>
<keyword id="KW-0732">Signal</keyword>
<proteinExistence type="inferred from homology"/>
<organism>
    <name type="scientific">Anaeromyxobacter dehalogenans (strain 2CP-C)</name>
    <dbReference type="NCBI Taxonomy" id="290397"/>
    <lineage>
        <taxon>Bacteria</taxon>
        <taxon>Pseudomonadati</taxon>
        <taxon>Myxococcota</taxon>
        <taxon>Myxococcia</taxon>
        <taxon>Myxococcales</taxon>
        <taxon>Cystobacterineae</taxon>
        <taxon>Anaeromyxobacteraceae</taxon>
        <taxon>Anaeromyxobacter</taxon>
    </lineage>
</organism>
<comment type="function">
    <text evidence="1">Part of the MsrPQ system that repairs oxidized periplasmic proteins containing methionine sulfoxide residues (Met-O), using respiratory chain electrons. Thus protects these proteins from oxidative-stress damage caused by reactive species of oxygen and chlorine generated by the host defense mechanisms. MsrPQ is essential for the maintenance of envelope integrity under bleach stress, rescuing a wide series of structurally unrelated periplasmic proteins from methionine oxidation. The catalytic subunit MsrP is non-stereospecific, being able to reduce both (R-) and (S-) diastereoisomers of methionine sulfoxide.</text>
</comment>
<comment type="catalytic activity">
    <reaction evidence="1">
        <text>L-methionyl-[protein] + a quinone + H2O = L-methionyl-(S)-S-oxide-[protein] + a quinol</text>
        <dbReference type="Rhea" id="RHEA:51292"/>
        <dbReference type="Rhea" id="RHEA-COMP:12313"/>
        <dbReference type="Rhea" id="RHEA-COMP:12315"/>
        <dbReference type="ChEBI" id="CHEBI:15377"/>
        <dbReference type="ChEBI" id="CHEBI:16044"/>
        <dbReference type="ChEBI" id="CHEBI:24646"/>
        <dbReference type="ChEBI" id="CHEBI:44120"/>
        <dbReference type="ChEBI" id="CHEBI:132124"/>
    </reaction>
</comment>
<comment type="catalytic activity">
    <reaction evidence="1">
        <text>L-methionyl-[protein] + a quinone + H2O = L-methionyl-(R)-S-oxide-[protein] + a quinol</text>
        <dbReference type="Rhea" id="RHEA:51296"/>
        <dbReference type="Rhea" id="RHEA-COMP:12313"/>
        <dbReference type="Rhea" id="RHEA-COMP:12314"/>
        <dbReference type="ChEBI" id="CHEBI:15377"/>
        <dbReference type="ChEBI" id="CHEBI:16044"/>
        <dbReference type="ChEBI" id="CHEBI:24646"/>
        <dbReference type="ChEBI" id="CHEBI:45764"/>
        <dbReference type="ChEBI" id="CHEBI:132124"/>
    </reaction>
</comment>
<comment type="cofactor">
    <cofactor evidence="1">
        <name>Mo-molybdopterin</name>
        <dbReference type="ChEBI" id="CHEBI:71302"/>
    </cofactor>
    <text evidence="1">Binds 1 Mo-molybdopterin (Mo-MPT) cofactor per subunit.</text>
</comment>
<comment type="subunit">
    <text evidence="1">Heterodimer of a catalytic subunit (MsrP) and a heme-binding subunit (MsrQ).</text>
</comment>
<comment type="subcellular location">
    <subcellularLocation>
        <location evidence="1">Periplasm</location>
    </subcellularLocation>
    <text evidence="1">Is attached to the inner membrane when interacting with the MsrQ subunit.</text>
</comment>
<comment type="PTM">
    <text evidence="1">Predicted to be exported by the Tat system. The position of the signal peptide cleavage has not been experimentally proven.</text>
</comment>
<comment type="similarity">
    <text evidence="1">Belongs to the MsrP family.</text>
</comment>
<dbReference type="EC" id="1.8.5.-" evidence="1"/>
<dbReference type="EMBL" id="CP000251">
    <property type="protein sequence ID" value="ABC83741.1"/>
    <property type="molecule type" value="Genomic_DNA"/>
</dbReference>
<dbReference type="RefSeq" id="WP_011423023.1">
    <property type="nucleotide sequence ID" value="NC_007760.1"/>
</dbReference>
<dbReference type="SMR" id="Q2IGN2"/>
<dbReference type="STRING" id="290397.Adeh_3977"/>
<dbReference type="KEGG" id="ade:Adeh_3977"/>
<dbReference type="eggNOG" id="COG2041">
    <property type="taxonomic scope" value="Bacteria"/>
</dbReference>
<dbReference type="HOGENOM" id="CLU_045520_0_0_7"/>
<dbReference type="OrthoDB" id="9795587at2"/>
<dbReference type="Proteomes" id="UP000001935">
    <property type="component" value="Chromosome"/>
</dbReference>
<dbReference type="GO" id="GO:0042597">
    <property type="term" value="C:periplasmic space"/>
    <property type="evidence" value="ECO:0007669"/>
    <property type="project" value="UniProtKB-SubCell"/>
</dbReference>
<dbReference type="GO" id="GO:0046872">
    <property type="term" value="F:metal ion binding"/>
    <property type="evidence" value="ECO:0007669"/>
    <property type="project" value="UniProtKB-KW"/>
</dbReference>
<dbReference type="GO" id="GO:0043546">
    <property type="term" value="F:molybdopterin cofactor binding"/>
    <property type="evidence" value="ECO:0007669"/>
    <property type="project" value="UniProtKB-UniRule"/>
</dbReference>
<dbReference type="GO" id="GO:0016672">
    <property type="term" value="F:oxidoreductase activity, acting on a sulfur group of donors, quinone or similar compound as acceptor"/>
    <property type="evidence" value="ECO:0007669"/>
    <property type="project" value="UniProtKB-UniRule"/>
</dbReference>
<dbReference type="GO" id="GO:0030091">
    <property type="term" value="P:protein repair"/>
    <property type="evidence" value="ECO:0007669"/>
    <property type="project" value="UniProtKB-UniRule"/>
</dbReference>
<dbReference type="Gene3D" id="3.90.420.10">
    <property type="entry name" value="Oxidoreductase, molybdopterin-binding domain"/>
    <property type="match status" value="1"/>
</dbReference>
<dbReference type="HAMAP" id="MF_01206">
    <property type="entry name" value="MsrP"/>
    <property type="match status" value="1"/>
</dbReference>
<dbReference type="InterPro" id="IPR022867">
    <property type="entry name" value="MsrP"/>
</dbReference>
<dbReference type="InterPro" id="IPR000572">
    <property type="entry name" value="OxRdtase_Mopterin-bd_dom"/>
</dbReference>
<dbReference type="InterPro" id="IPR036374">
    <property type="entry name" value="OxRdtase_Mopterin-bd_sf"/>
</dbReference>
<dbReference type="InterPro" id="IPR006311">
    <property type="entry name" value="TAT_signal"/>
</dbReference>
<dbReference type="NCBIfam" id="NF003767">
    <property type="entry name" value="PRK05363.1"/>
    <property type="match status" value="1"/>
</dbReference>
<dbReference type="PANTHER" id="PTHR43032">
    <property type="entry name" value="PROTEIN-METHIONINE-SULFOXIDE REDUCTASE"/>
    <property type="match status" value="1"/>
</dbReference>
<dbReference type="PANTHER" id="PTHR43032:SF3">
    <property type="entry name" value="PROTEIN-METHIONINE-SULFOXIDE REDUCTASE CATALYTIC SUBUNIT MSRP"/>
    <property type="match status" value="1"/>
</dbReference>
<dbReference type="Pfam" id="PF00174">
    <property type="entry name" value="Oxidored_molyb"/>
    <property type="match status" value="1"/>
</dbReference>
<dbReference type="SUPFAM" id="SSF56524">
    <property type="entry name" value="Oxidoreductase molybdopterin-binding domain"/>
    <property type="match status" value="1"/>
</dbReference>
<dbReference type="PROSITE" id="PS51318">
    <property type="entry name" value="TAT"/>
    <property type="match status" value="1"/>
</dbReference>
<name>MSRP_ANADE</name>
<reference key="1">
    <citation type="submission" date="2006-01" db="EMBL/GenBank/DDBJ databases">
        <title>Complete sequence of Anaeromyxobacter dehalogenans 2CP-C.</title>
        <authorList>
            <person name="Copeland A."/>
            <person name="Lucas S."/>
            <person name="Lapidus A."/>
            <person name="Barry K."/>
            <person name="Detter J.C."/>
            <person name="Glavina T."/>
            <person name="Hammon N."/>
            <person name="Israni S."/>
            <person name="Pitluck S."/>
            <person name="Brettin T."/>
            <person name="Bruce D."/>
            <person name="Han C."/>
            <person name="Tapia R."/>
            <person name="Gilna P."/>
            <person name="Kiss H."/>
            <person name="Schmutz J."/>
            <person name="Larimer F."/>
            <person name="Land M."/>
            <person name="Kyrpides N."/>
            <person name="Anderson I."/>
            <person name="Sanford R.A."/>
            <person name="Ritalahti K.M."/>
            <person name="Thomas H.S."/>
            <person name="Kirby J.R."/>
            <person name="Zhulin I.B."/>
            <person name="Loeffler F.E."/>
            <person name="Richardson P."/>
        </authorList>
    </citation>
    <scope>NUCLEOTIDE SEQUENCE [LARGE SCALE GENOMIC DNA]</scope>
    <source>
        <strain>2CP-C</strain>
    </source>
</reference>
<feature type="signal peptide" description="Tat-type signal" evidence="1">
    <location>
        <begin position="1"/>
        <end position="44"/>
    </location>
</feature>
<feature type="chain" id="PRO_1000164654" description="Protein-methionine-sulfoxide reductase catalytic subunit MsrP" evidence="1">
    <location>
        <begin position="45"/>
        <end position="313"/>
    </location>
</feature>
<feature type="binding site" evidence="1">
    <location>
        <position position="76"/>
    </location>
    <ligand>
        <name>Mo-molybdopterin</name>
        <dbReference type="ChEBI" id="CHEBI:71302"/>
    </ligand>
</feature>
<feature type="binding site" evidence="1">
    <location>
        <begin position="79"/>
        <end position="80"/>
    </location>
    <ligand>
        <name>Mo-molybdopterin</name>
        <dbReference type="ChEBI" id="CHEBI:71302"/>
    </ligand>
</feature>
<feature type="binding site" evidence="1">
    <location>
        <position position="134"/>
    </location>
    <ligand>
        <name>Mo-molybdopterin</name>
        <dbReference type="ChEBI" id="CHEBI:71302"/>
    </ligand>
    <ligandPart>
        <name>Mo</name>
        <dbReference type="ChEBI" id="CHEBI:28685"/>
    </ligandPart>
</feature>
<feature type="binding site" evidence="1">
    <location>
        <position position="169"/>
    </location>
    <ligand>
        <name>Mo-molybdopterin</name>
        <dbReference type="ChEBI" id="CHEBI:71302"/>
    </ligand>
</feature>
<feature type="binding site" evidence="1">
    <location>
        <position position="217"/>
    </location>
    <ligand>
        <name>Mo-molybdopterin</name>
        <dbReference type="ChEBI" id="CHEBI:71302"/>
    </ligand>
</feature>
<feature type="binding site" evidence="1">
    <location>
        <position position="222"/>
    </location>
    <ligand>
        <name>Mo-molybdopterin</name>
        <dbReference type="ChEBI" id="CHEBI:71302"/>
    </ligand>
</feature>
<feature type="binding site" evidence="1">
    <location>
        <begin position="233"/>
        <end position="235"/>
    </location>
    <ligand>
        <name>Mo-molybdopterin</name>
        <dbReference type="ChEBI" id="CHEBI:71302"/>
    </ligand>
</feature>